<evidence type="ECO:0000250" key="1">
    <source>
        <dbReference type="UniProtKB" id="Q6GTS8"/>
    </source>
</evidence>
<evidence type="ECO:0000250" key="2">
    <source>
        <dbReference type="UniProtKB" id="Q8C165"/>
    </source>
</evidence>
<evidence type="ECO:0000255" key="3"/>
<evidence type="ECO:0000305" key="4"/>
<evidence type="ECO:0000312" key="5">
    <source>
        <dbReference type="EMBL" id="AAI09433.1"/>
    </source>
</evidence>
<evidence type="ECO:0000312" key="6">
    <source>
        <dbReference type="ZFIN" id="ZDB-GENE-051120-102"/>
    </source>
</evidence>
<keyword id="KW-0325">Glycoprotein</keyword>
<keyword id="KW-0378">Hydrolase</keyword>
<keyword id="KW-0456">Lyase</keyword>
<keyword id="KW-0479">Metal-binding</keyword>
<keyword id="KW-0645">Protease</keyword>
<keyword id="KW-1185">Reference proteome</keyword>
<keyword id="KW-0964">Secreted</keyword>
<keyword id="KW-0732">Signal</keyword>
<keyword id="KW-0862">Zinc</keyword>
<comment type="function">
    <text evidence="2">Secreted enzyme that regulates the endogenous N-fatty acyl amino acid (NAAs) tissue and circulating levels by functioning as a bidirectional NAA synthase/hydrolase. It condenses free fatty acids and free amino acids to generate NAAs and bidirectionally catalyzes the reverse hydrolysis reaction. Some of these NAAs stimulate oxidative metabolism via mitochondrial uncoupling, increasing energy expenditure in a UPC1-independent manner. Thereby, this secreted protein may indirectly regulate whole body energy expenditure. PM20D1 circulates in tight association with both low- and high-density (LDL and HDL,respectively) lipoprotein particles.</text>
</comment>
<comment type="catalytic activity">
    <reaction evidence="2">
        <text>an N-acyl-L-amino acid + H2O = an L-alpha-amino acid + a carboxylate</text>
        <dbReference type="Rhea" id="RHEA:15565"/>
        <dbReference type="ChEBI" id="CHEBI:15377"/>
        <dbReference type="ChEBI" id="CHEBI:29067"/>
        <dbReference type="ChEBI" id="CHEBI:59869"/>
        <dbReference type="ChEBI" id="CHEBI:59874"/>
        <dbReference type="EC" id="3.5.1.14"/>
    </reaction>
    <physiologicalReaction direction="left-to-right" evidence="2">
        <dbReference type="Rhea" id="RHEA:15566"/>
    </physiologicalReaction>
    <physiologicalReaction direction="right-to-left" evidence="2">
        <dbReference type="Rhea" id="RHEA:15567"/>
    </physiologicalReaction>
</comment>
<comment type="catalytic activity">
    <reaction evidence="2">
        <text>an N-acyl-aromatic L-alpha-amino acid + H2O = an aromatic L-alpha-amino acid + a carboxylate</text>
        <dbReference type="Rhea" id="RHEA:54184"/>
        <dbReference type="ChEBI" id="CHEBI:15377"/>
        <dbReference type="ChEBI" id="CHEBI:29067"/>
        <dbReference type="ChEBI" id="CHEBI:84824"/>
        <dbReference type="ChEBI" id="CHEBI:138093"/>
        <dbReference type="EC" id="3.5.1.114"/>
    </reaction>
    <physiologicalReaction direction="left-to-right" evidence="2">
        <dbReference type="Rhea" id="RHEA:54185"/>
    </physiologicalReaction>
    <physiologicalReaction direction="right-to-left" evidence="2">
        <dbReference type="Rhea" id="RHEA:54186"/>
    </physiologicalReaction>
</comment>
<comment type="catalytic activity">
    <reaction evidence="2">
        <text>N-(5Z,8Z,11Z,14Z)-eicosatetraenoyl-glycine + H2O = (5Z,8Z,11Z,14Z)-eicosatetraenoate + glycine</text>
        <dbReference type="Rhea" id="RHEA:64108"/>
        <dbReference type="ChEBI" id="CHEBI:15377"/>
        <dbReference type="ChEBI" id="CHEBI:32395"/>
        <dbReference type="ChEBI" id="CHEBI:57305"/>
        <dbReference type="ChEBI" id="CHEBI:59002"/>
    </reaction>
    <physiologicalReaction direction="left-to-right" evidence="2">
        <dbReference type="Rhea" id="RHEA:64109"/>
    </physiologicalReaction>
    <physiologicalReaction direction="right-to-left" evidence="2">
        <dbReference type="Rhea" id="RHEA:64110"/>
    </physiologicalReaction>
</comment>
<comment type="catalytic activity">
    <reaction evidence="2">
        <text>N-hexadecanoyl-L-phenylalanine + H2O = hexadecanoate + L-phenylalanine</text>
        <dbReference type="Rhea" id="RHEA:64124"/>
        <dbReference type="ChEBI" id="CHEBI:7896"/>
        <dbReference type="ChEBI" id="CHEBI:15377"/>
        <dbReference type="ChEBI" id="CHEBI:58095"/>
        <dbReference type="ChEBI" id="CHEBI:149699"/>
    </reaction>
    <physiologicalReaction direction="left-to-right" evidence="2">
        <dbReference type="Rhea" id="RHEA:64125"/>
    </physiologicalReaction>
</comment>
<comment type="catalytic activity">
    <reaction evidence="2">
        <text>N-octadecanoyl-L-phenylalanine + H2O = octadecanoate + L-phenylalanine</text>
        <dbReference type="Rhea" id="RHEA:64128"/>
        <dbReference type="ChEBI" id="CHEBI:15377"/>
        <dbReference type="ChEBI" id="CHEBI:25629"/>
        <dbReference type="ChEBI" id="CHEBI:58095"/>
        <dbReference type="ChEBI" id="CHEBI:149700"/>
    </reaction>
    <physiologicalReaction direction="left-to-right" evidence="2">
        <dbReference type="Rhea" id="RHEA:64129"/>
    </physiologicalReaction>
</comment>
<comment type="catalytic activity">
    <reaction evidence="2">
        <text>N-(4Z,7Z,10Z,13Z,16Z,19Z-docosahexaenoyl)-L-phenylalanine + H2O = (4Z,7Z,10Z,13Z,16Z,19Z)-docosahexaenoate + L-phenylalanine</text>
        <dbReference type="Rhea" id="RHEA:64132"/>
        <dbReference type="ChEBI" id="CHEBI:15377"/>
        <dbReference type="ChEBI" id="CHEBI:58095"/>
        <dbReference type="ChEBI" id="CHEBI:77016"/>
        <dbReference type="ChEBI" id="CHEBI:149701"/>
    </reaction>
    <physiologicalReaction direction="left-to-right" evidence="2">
        <dbReference type="Rhea" id="RHEA:64133"/>
    </physiologicalReaction>
</comment>
<comment type="catalytic activity">
    <reaction evidence="2">
        <text>N-(9Z-octadecenoyl)-L-asparagine + H2O = L-asparagine + (9Z)-octadecenoate</text>
        <dbReference type="Rhea" id="RHEA:64136"/>
        <dbReference type="ChEBI" id="CHEBI:15377"/>
        <dbReference type="ChEBI" id="CHEBI:30823"/>
        <dbReference type="ChEBI" id="CHEBI:58048"/>
        <dbReference type="ChEBI" id="CHEBI:149730"/>
    </reaction>
    <physiologicalReaction direction="left-to-right" evidence="2">
        <dbReference type="Rhea" id="RHEA:64137"/>
    </physiologicalReaction>
</comment>
<comment type="catalytic activity">
    <reaction evidence="2">
        <text>(9Z)-octadecenoate + glycine = N-(9Z-octadecenoyl)glycine + H2O</text>
        <dbReference type="Rhea" id="RHEA:51316"/>
        <dbReference type="ChEBI" id="CHEBI:15377"/>
        <dbReference type="ChEBI" id="CHEBI:30823"/>
        <dbReference type="ChEBI" id="CHEBI:57305"/>
        <dbReference type="ChEBI" id="CHEBI:133992"/>
    </reaction>
    <physiologicalReaction direction="right-to-left" evidence="2">
        <dbReference type="Rhea" id="RHEA:51318"/>
    </physiologicalReaction>
</comment>
<comment type="catalytic activity">
    <reaction evidence="2">
        <text>N-(9Z-octadecenoyl)-L-lysine + H2O = L-lysine + (9Z)-octadecenoate</text>
        <dbReference type="Rhea" id="RHEA:64192"/>
        <dbReference type="ChEBI" id="CHEBI:15377"/>
        <dbReference type="ChEBI" id="CHEBI:30823"/>
        <dbReference type="ChEBI" id="CHEBI:32551"/>
        <dbReference type="ChEBI" id="CHEBI:149731"/>
    </reaction>
    <physiologicalReaction direction="left-to-right" evidence="2">
        <dbReference type="Rhea" id="RHEA:64193"/>
    </physiologicalReaction>
</comment>
<comment type="catalytic activity">
    <reaction evidence="2">
        <text>N-(9Z-octadecenoyl)-L-methionine + H2O = (9Z)-octadecenoate + L-methionine</text>
        <dbReference type="Rhea" id="RHEA:64144"/>
        <dbReference type="ChEBI" id="CHEBI:15377"/>
        <dbReference type="ChEBI" id="CHEBI:30823"/>
        <dbReference type="ChEBI" id="CHEBI:57844"/>
        <dbReference type="ChEBI" id="CHEBI:149732"/>
    </reaction>
    <physiologicalReaction direction="left-to-right" evidence="2">
        <dbReference type="Rhea" id="RHEA:64145"/>
    </physiologicalReaction>
</comment>
<comment type="catalytic activity">
    <reaction evidence="2">
        <text>N-(9Z-octadecenoyl)-L-serine + H2O = L-serine + (9Z)-octadecenoate</text>
        <dbReference type="Rhea" id="RHEA:51352"/>
        <dbReference type="ChEBI" id="CHEBI:15377"/>
        <dbReference type="ChEBI" id="CHEBI:30823"/>
        <dbReference type="ChEBI" id="CHEBI:33384"/>
        <dbReference type="ChEBI" id="CHEBI:134031"/>
    </reaction>
    <physiologicalReaction direction="left-to-right" evidence="2">
        <dbReference type="Rhea" id="RHEA:51353"/>
    </physiologicalReaction>
</comment>
<comment type="catalytic activity">
    <reaction evidence="2">
        <text>N-(9Z-octadecenoyl)-L-tryptophan + H2O = L-tryptophan + (9Z)-octadecenoate</text>
        <dbReference type="Rhea" id="RHEA:64176"/>
        <dbReference type="ChEBI" id="CHEBI:15377"/>
        <dbReference type="ChEBI" id="CHEBI:30823"/>
        <dbReference type="ChEBI" id="CHEBI:57912"/>
        <dbReference type="ChEBI" id="CHEBI:149733"/>
    </reaction>
    <physiologicalReaction direction="left-to-right" evidence="2">
        <dbReference type="Rhea" id="RHEA:64177"/>
    </physiologicalReaction>
</comment>
<comment type="catalytic activity">
    <reaction evidence="2">
        <text>N-(9Z-octadecenoyl)-L-tyrosine + H2O = L-tyrosine + (9Z)-octadecenoate</text>
        <dbReference type="Rhea" id="RHEA:64184"/>
        <dbReference type="ChEBI" id="CHEBI:15377"/>
        <dbReference type="ChEBI" id="CHEBI:30823"/>
        <dbReference type="ChEBI" id="CHEBI:58315"/>
        <dbReference type="ChEBI" id="CHEBI:149734"/>
    </reaction>
    <physiologicalReaction direction="left-to-right" evidence="2">
        <dbReference type="Rhea" id="RHEA:64185"/>
    </physiologicalReaction>
</comment>
<comment type="catalytic activity">
    <reaction evidence="2">
        <text>N-(9Z-octadecenoyl)-L-glutamine + H2O = L-glutamine + (9Z)-octadecenoate</text>
        <dbReference type="Rhea" id="RHEA:51356"/>
        <dbReference type="ChEBI" id="CHEBI:15377"/>
        <dbReference type="ChEBI" id="CHEBI:30823"/>
        <dbReference type="ChEBI" id="CHEBI:58359"/>
        <dbReference type="ChEBI" id="CHEBI:134033"/>
    </reaction>
    <physiologicalReaction direction="left-to-right" evidence="2">
        <dbReference type="Rhea" id="RHEA:51357"/>
    </physiologicalReaction>
</comment>
<comment type="catalytic activity">
    <reaction evidence="2">
        <text>N-(5Z,8Z,11Z,14Z-eicosatetraenoyl)-L-serine + H2O = (5Z,8Z,11Z,14Z)-eicosatetraenoate + L-serine</text>
        <dbReference type="Rhea" id="RHEA:64116"/>
        <dbReference type="ChEBI" id="CHEBI:15377"/>
        <dbReference type="ChEBI" id="CHEBI:32395"/>
        <dbReference type="ChEBI" id="CHEBI:33384"/>
        <dbReference type="ChEBI" id="CHEBI:149697"/>
    </reaction>
    <physiologicalReaction direction="left-to-right" evidence="2">
        <dbReference type="Rhea" id="RHEA:64117"/>
    </physiologicalReaction>
    <physiologicalReaction direction="right-to-left" evidence="2">
        <dbReference type="Rhea" id="RHEA:64118"/>
    </physiologicalReaction>
</comment>
<comment type="catalytic activity">
    <reaction evidence="2">
        <text>(5Z,8Z,11Z,14Z)-eicosatetraenoate + L-phenylalanine = N-(5Z,8Z,11Z,14Z-eicosatetraenoyl)-L-phenylalanine + H2O</text>
        <dbReference type="Rhea" id="RHEA:51312"/>
        <dbReference type="ChEBI" id="CHEBI:15377"/>
        <dbReference type="ChEBI" id="CHEBI:32395"/>
        <dbReference type="ChEBI" id="CHEBI:58095"/>
        <dbReference type="ChEBI" id="CHEBI:134022"/>
    </reaction>
    <physiologicalReaction direction="left-to-right" evidence="2">
        <dbReference type="Rhea" id="RHEA:51313"/>
    </physiologicalReaction>
    <physiologicalReaction direction="right-to-left" evidence="2">
        <dbReference type="Rhea" id="RHEA:51314"/>
    </physiologicalReaction>
</comment>
<comment type="catalytic activity">
    <reaction evidence="2">
        <text>N-(9Z-octadecenoyl)-L-leucine + H2O = L-leucine + (9Z)-octadecenoate</text>
        <dbReference type="Rhea" id="RHEA:51360"/>
        <dbReference type="ChEBI" id="CHEBI:15377"/>
        <dbReference type="ChEBI" id="CHEBI:30823"/>
        <dbReference type="ChEBI" id="CHEBI:57427"/>
        <dbReference type="ChEBI" id="CHEBI:134035"/>
    </reaction>
    <physiologicalReaction direction="left-to-right" evidence="2">
        <dbReference type="Rhea" id="RHEA:51361"/>
    </physiologicalReaction>
    <physiologicalReaction direction="right-to-left" evidence="2">
        <dbReference type="Rhea" id="RHEA:51362"/>
    </physiologicalReaction>
</comment>
<comment type="catalytic activity">
    <reaction evidence="2">
        <text>L-phenylalanine + (9Z)-octadecenoate = N-(9Z-octadecenoyl)-L-phenylalanine + H2O</text>
        <dbReference type="Rhea" id="RHEA:51300"/>
        <dbReference type="ChEBI" id="CHEBI:15377"/>
        <dbReference type="ChEBI" id="CHEBI:30823"/>
        <dbReference type="ChEBI" id="CHEBI:58095"/>
        <dbReference type="ChEBI" id="CHEBI:134020"/>
    </reaction>
    <physiologicalReaction direction="left-to-right" evidence="2">
        <dbReference type="Rhea" id="RHEA:51301"/>
    </physiologicalReaction>
    <physiologicalReaction direction="right-to-left" evidence="2">
        <dbReference type="Rhea" id="RHEA:51302"/>
    </physiologicalReaction>
</comment>
<comment type="cofactor">
    <cofactor evidence="1">
        <name>Zn(2+)</name>
        <dbReference type="ChEBI" id="CHEBI:29105"/>
    </cofactor>
    <text evidence="1">Binds 2 Zn(2+) ions per subunit.</text>
</comment>
<comment type="activity regulation">
    <text evidence="2">Lipoproteins are powerful coactivators of PM20D1 activity in vitro and NAA biosynthesis in vivo.</text>
</comment>
<comment type="pathway">
    <text evidence="2">Amino-acid metabolism.</text>
</comment>
<comment type="pathway">
    <text evidence="2">Energy metabolism; electron transfer.</text>
</comment>
<comment type="pathway">
    <text evidence="2">Lipid metabolism; fatty acid metabolism.</text>
</comment>
<comment type="subcellular location">
    <subcellularLocation>
        <location evidence="2">Secreted</location>
    </subcellularLocation>
</comment>
<comment type="similarity">
    <text evidence="3">Belongs to the peptidase M20A family.</text>
</comment>
<name>P2011_DANRE</name>
<sequence>MKTKFTKKTVLKFFGILFAILLLSVLILFSVVIGRTFTFKVNRELGQWENTSTIYPYLSPEQREKLLDNFKVAVQIPTVSFSESDQNITALQEFDLLLRRVFPKVFSSSLVRHEVVGNYSHLFTVVGADAGLEPYMLLAHIDVVPANEAGGWDAPPFSAQEIDGFIYGRGTIDNKQSVMGILQALEYLLERGYTPRRTFYIGLGHDEEINGEEGAVKIVNLLKSRGVKLLYVLDEGLTIMDGVVDGLNEPAALIGVSEKGQTTVKLSVSTPPGHSSMPPRESSIGILASAVARLEKNRMPNLFGHGPERATFEHLAHKFGWSYRMIMSNLWLFSSLLSSVLEGQPDTNAFVRTTTAVTMFNSGVKINVMPAHAEAFVNFRIHSSQTVQGVLNRIESTVSDKRVKVEFINGFDPLPIGSYEDDTFGYQIIKKSVQDIFPQVTVTPGICVANTDSRHYTQLSPDIYRFAPSWYKPGDSARFHGVNERISIQNYEEIVLFYFQLMQNSDVRNLPTLRS</sequence>
<gene>
    <name evidence="6" type="primary">pm20d1.1</name>
    <name type="ORF">zgc:123113</name>
</gene>
<accession>Q32LT9</accession>
<reference evidence="5" key="1">
    <citation type="submission" date="2005-11" db="EMBL/GenBank/DDBJ databases">
        <authorList>
            <consortium name="NIH - Zebrafish Gene Collection (ZGC) project"/>
        </authorList>
    </citation>
    <scope>NUCLEOTIDE SEQUENCE [LARGE SCALE MRNA]</scope>
    <source>
        <tissue evidence="5">Larva</tissue>
    </source>
</reference>
<dbReference type="EC" id="3.5.1.114" evidence="2"/>
<dbReference type="EC" id="3.5.1.14" evidence="2"/>
<dbReference type="EMBL" id="BC109432">
    <property type="protein sequence ID" value="AAI09433.1"/>
    <property type="molecule type" value="mRNA"/>
</dbReference>
<dbReference type="RefSeq" id="NP_001032448.1">
    <property type="nucleotide sequence ID" value="NM_001037371.1"/>
</dbReference>
<dbReference type="SMR" id="Q32LT9"/>
<dbReference type="FunCoup" id="Q32LT9">
    <property type="interactions" value="29"/>
</dbReference>
<dbReference type="STRING" id="7955.ENSDARP00000114349"/>
<dbReference type="GlyCosmos" id="Q32LT9">
    <property type="glycosylation" value="3 sites, No reported glycans"/>
</dbReference>
<dbReference type="PaxDb" id="7955-ENSDARP00000054680"/>
<dbReference type="GeneID" id="553216"/>
<dbReference type="KEGG" id="dre:553216"/>
<dbReference type="AGR" id="ZFIN:ZDB-GENE-051120-102"/>
<dbReference type="CTD" id="553216"/>
<dbReference type="ZFIN" id="ZDB-GENE-051120-102">
    <property type="gene designation" value="pm20d1.1"/>
</dbReference>
<dbReference type="eggNOG" id="KOG2275">
    <property type="taxonomic scope" value="Eukaryota"/>
</dbReference>
<dbReference type="InParanoid" id="Q32LT9"/>
<dbReference type="OrthoDB" id="3064516at2759"/>
<dbReference type="PhylomeDB" id="Q32LT9"/>
<dbReference type="UniPathway" id="UPA00092"/>
<dbReference type="UniPathway" id="UPA00199"/>
<dbReference type="PRO" id="PR:Q32LT9"/>
<dbReference type="Proteomes" id="UP000000437">
    <property type="component" value="Chromosome 23"/>
</dbReference>
<dbReference type="GO" id="GO:0005615">
    <property type="term" value="C:extracellular space"/>
    <property type="evidence" value="ECO:0000250"/>
    <property type="project" value="UniProtKB"/>
</dbReference>
<dbReference type="GO" id="GO:0004046">
    <property type="term" value="F:aminoacylase activity"/>
    <property type="evidence" value="ECO:0007669"/>
    <property type="project" value="UniProtKB-EC"/>
</dbReference>
<dbReference type="GO" id="GO:0016811">
    <property type="term" value="F:hydrolase activity, acting on carbon-nitrogen (but not peptide) bonds, in linear amides"/>
    <property type="evidence" value="ECO:0000250"/>
    <property type="project" value="UniProtKB"/>
</dbReference>
<dbReference type="GO" id="GO:0016829">
    <property type="term" value="F:lyase activity"/>
    <property type="evidence" value="ECO:0007669"/>
    <property type="project" value="UniProtKB-KW"/>
</dbReference>
<dbReference type="GO" id="GO:0046872">
    <property type="term" value="F:metal ion binding"/>
    <property type="evidence" value="ECO:0007669"/>
    <property type="project" value="UniProtKB-KW"/>
</dbReference>
<dbReference type="GO" id="GO:0008233">
    <property type="term" value="F:peptidase activity"/>
    <property type="evidence" value="ECO:0007669"/>
    <property type="project" value="UniProtKB-KW"/>
</dbReference>
<dbReference type="GO" id="GO:1990845">
    <property type="term" value="P:adaptive thermogenesis"/>
    <property type="evidence" value="ECO:0000250"/>
    <property type="project" value="UniProtKB"/>
</dbReference>
<dbReference type="GO" id="GO:0043604">
    <property type="term" value="P:amide biosynthetic process"/>
    <property type="evidence" value="ECO:0000250"/>
    <property type="project" value="UniProtKB"/>
</dbReference>
<dbReference type="GO" id="GO:0043605">
    <property type="term" value="P:amide catabolic process"/>
    <property type="evidence" value="ECO:0000250"/>
    <property type="project" value="UniProtKB"/>
</dbReference>
<dbReference type="GO" id="GO:0006520">
    <property type="term" value="P:amino acid metabolic process"/>
    <property type="evidence" value="ECO:0000250"/>
    <property type="project" value="UniProtKB"/>
</dbReference>
<dbReference type="GO" id="GO:0097009">
    <property type="term" value="P:energy homeostasis"/>
    <property type="evidence" value="ECO:0000250"/>
    <property type="project" value="UniProtKB"/>
</dbReference>
<dbReference type="GO" id="GO:0006631">
    <property type="term" value="P:fatty acid metabolic process"/>
    <property type="evidence" value="ECO:0007669"/>
    <property type="project" value="UniProtKB-UniPathway"/>
</dbReference>
<dbReference type="GO" id="GO:0006629">
    <property type="term" value="P:lipid metabolic process"/>
    <property type="evidence" value="ECO:0000250"/>
    <property type="project" value="UniProtKB"/>
</dbReference>
<dbReference type="GO" id="GO:0006508">
    <property type="term" value="P:proteolysis"/>
    <property type="evidence" value="ECO:0007669"/>
    <property type="project" value="UniProtKB-KW"/>
</dbReference>
<dbReference type="GO" id="GO:0022904">
    <property type="term" value="P:respiratory electron transport chain"/>
    <property type="evidence" value="ECO:0007669"/>
    <property type="project" value="UniProtKB-UniPathway"/>
</dbReference>
<dbReference type="CDD" id="cd05674">
    <property type="entry name" value="M20_yscS"/>
    <property type="match status" value="1"/>
</dbReference>
<dbReference type="FunFam" id="1.10.150.900:FF:000003">
    <property type="entry name" value="N-fatty-acyl-amino acid synthase/hydrolase PM20D1"/>
    <property type="match status" value="1"/>
</dbReference>
<dbReference type="FunFam" id="3.40.630.10:FF:000027">
    <property type="entry name" value="N-fatty-acyl-amino acid synthase/hydrolase PM20D1"/>
    <property type="match status" value="1"/>
</dbReference>
<dbReference type="Gene3D" id="1.10.150.900">
    <property type="match status" value="1"/>
</dbReference>
<dbReference type="Gene3D" id="3.30.70.360">
    <property type="match status" value="1"/>
</dbReference>
<dbReference type="Gene3D" id="3.40.630.10">
    <property type="entry name" value="Zn peptidases"/>
    <property type="match status" value="1"/>
</dbReference>
<dbReference type="InterPro" id="IPR036264">
    <property type="entry name" value="Bact_exopeptidase_dim_dom"/>
</dbReference>
<dbReference type="InterPro" id="IPR047177">
    <property type="entry name" value="Pept_M20A"/>
</dbReference>
<dbReference type="InterPro" id="IPR002933">
    <property type="entry name" value="Peptidase_M20"/>
</dbReference>
<dbReference type="InterPro" id="IPR011650">
    <property type="entry name" value="Peptidase_M20_dimer"/>
</dbReference>
<dbReference type="PANTHER" id="PTHR45962">
    <property type="entry name" value="N-FATTY-ACYL-AMINO ACID SYNTHASE/HYDROLASE PM20D1"/>
    <property type="match status" value="1"/>
</dbReference>
<dbReference type="PANTHER" id="PTHR45962:SF1">
    <property type="entry name" value="N-FATTY-ACYL-AMINO ACID SYNTHASE_HYDROLASE PM20D1"/>
    <property type="match status" value="1"/>
</dbReference>
<dbReference type="Pfam" id="PF07687">
    <property type="entry name" value="M20_dimer"/>
    <property type="match status" value="1"/>
</dbReference>
<dbReference type="Pfam" id="PF01546">
    <property type="entry name" value="Peptidase_M20"/>
    <property type="match status" value="1"/>
</dbReference>
<dbReference type="SUPFAM" id="SSF55031">
    <property type="entry name" value="Bacterial exopeptidase dimerisation domain"/>
    <property type="match status" value="1"/>
</dbReference>
<dbReference type="SUPFAM" id="SSF53187">
    <property type="entry name" value="Zn-dependent exopeptidases"/>
    <property type="match status" value="1"/>
</dbReference>
<organism>
    <name type="scientific">Danio rerio</name>
    <name type="common">Zebrafish</name>
    <name type="synonym">Brachydanio rerio</name>
    <dbReference type="NCBI Taxonomy" id="7955"/>
    <lineage>
        <taxon>Eukaryota</taxon>
        <taxon>Metazoa</taxon>
        <taxon>Chordata</taxon>
        <taxon>Craniata</taxon>
        <taxon>Vertebrata</taxon>
        <taxon>Euteleostomi</taxon>
        <taxon>Actinopterygii</taxon>
        <taxon>Neopterygii</taxon>
        <taxon>Teleostei</taxon>
        <taxon>Ostariophysi</taxon>
        <taxon>Cypriniformes</taxon>
        <taxon>Danionidae</taxon>
        <taxon>Danioninae</taxon>
        <taxon>Danio</taxon>
    </lineage>
</organism>
<feature type="signal peptide" evidence="3">
    <location>
        <begin position="1"/>
        <end position="34"/>
    </location>
</feature>
<feature type="chain" id="PRO_0000401132" description="N-fatty-acyl-amino acid synthase/hydrolase PM20D1.1" evidence="3">
    <location>
        <begin position="35"/>
        <end position="515"/>
    </location>
</feature>
<feature type="active site" evidence="1">
    <location>
        <position position="142"/>
    </location>
</feature>
<feature type="active site" description="Proton acceptor" evidence="1">
    <location>
        <position position="207"/>
    </location>
</feature>
<feature type="binding site" evidence="1">
    <location>
        <position position="140"/>
    </location>
    <ligand>
        <name>Zn(2+)</name>
        <dbReference type="ChEBI" id="CHEBI:29105"/>
        <label>2</label>
    </ligand>
</feature>
<feature type="binding site" evidence="1">
    <location>
        <position position="173"/>
    </location>
    <ligand>
        <name>Zn(2+)</name>
        <dbReference type="ChEBI" id="CHEBI:29105"/>
        <label>1</label>
    </ligand>
</feature>
<feature type="binding site" evidence="1">
    <location>
        <position position="173"/>
    </location>
    <ligand>
        <name>Zn(2+)</name>
        <dbReference type="ChEBI" id="CHEBI:29105"/>
        <label>2</label>
    </ligand>
</feature>
<feature type="binding site" evidence="1">
    <location>
        <position position="208"/>
    </location>
    <ligand>
        <name>Zn(2+)</name>
        <dbReference type="ChEBI" id="CHEBI:29105"/>
        <label>1</label>
    </ligand>
</feature>
<feature type="binding site" evidence="1">
    <location>
        <position position="234"/>
    </location>
    <ligand>
        <name>Zn(2+)</name>
        <dbReference type="ChEBI" id="CHEBI:29105"/>
        <label>2</label>
    </ligand>
</feature>
<feature type="binding site" evidence="1">
    <location>
        <position position="480"/>
    </location>
    <ligand>
        <name>Zn(2+)</name>
        <dbReference type="ChEBI" id="CHEBI:29105"/>
        <label>1</label>
    </ligand>
</feature>
<feature type="glycosylation site" description="N-linked (GlcNAc...) asparagine" evidence="3">
    <location>
        <position position="50"/>
    </location>
</feature>
<feature type="glycosylation site" description="N-linked (GlcNAc...) asparagine" evidence="3">
    <location>
        <position position="87"/>
    </location>
</feature>
<feature type="glycosylation site" description="N-linked (GlcNAc...) asparagine" evidence="3">
    <location>
        <position position="118"/>
    </location>
</feature>
<proteinExistence type="evidence at transcript level"/>
<protein>
    <recommendedName>
        <fullName evidence="4">N-fatty-acyl-amino acid synthase/hydrolase PM20D1.1</fullName>
        <ecNumber evidence="2">3.5.1.114</ecNumber>
        <ecNumber evidence="2">3.5.1.14</ecNumber>
    </recommendedName>
    <alternativeName>
        <fullName evidence="6">Peptidase M20 domain-containing protein 1.1</fullName>
    </alternativeName>
</protein>